<protein>
    <recommendedName>
        <fullName evidence="1">Putative nickel-responsive regulator</fullName>
    </recommendedName>
</protein>
<reference key="1">
    <citation type="journal article" date="2009" name="Proc. Natl. Acad. Sci. U.S.A.">
        <title>Biogeography of the Sulfolobus islandicus pan-genome.</title>
        <authorList>
            <person name="Reno M.L."/>
            <person name="Held N.L."/>
            <person name="Fields C.J."/>
            <person name="Burke P.V."/>
            <person name="Whitaker R.J."/>
        </authorList>
    </citation>
    <scope>NUCLEOTIDE SEQUENCE [LARGE SCALE GENOMIC DNA]</scope>
    <source>
        <strain>Y.G.57.14 / Yellowstone #1</strain>
    </source>
</reference>
<sequence>MSAEKISISLPKELYRELEDFITRKGIPDRSKIFQIALRNYLDENREGTEIIYGIINLVYDHEEASEALTEIQHEYKDNIISTLHLHVNERLCIEAIAVKGEKSKLVELNNRLGQIRGILKARLLISFPYEKT</sequence>
<organism>
    <name type="scientific">Saccharolobus islandicus (strain Y.G.57.14 / Yellowstone #1)</name>
    <name type="common">Sulfolobus islandicus</name>
    <dbReference type="NCBI Taxonomy" id="439386"/>
    <lineage>
        <taxon>Archaea</taxon>
        <taxon>Thermoproteota</taxon>
        <taxon>Thermoprotei</taxon>
        <taxon>Sulfolobales</taxon>
        <taxon>Sulfolobaceae</taxon>
        <taxon>Saccharolobus</taxon>
    </lineage>
</organism>
<evidence type="ECO:0000255" key="1">
    <source>
        <dbReference type="HAMAP-Rule" id="MF_00476"/>
    </source>
</evidence>
<dbReference type="EMBL" id="CP001403">
    <property type="protein sequence ID" value="ACP45743.1"/>
    <property type="molecule type" value="Genomic_DNA"/>
</dbReference>
<dbReference type="RefSeq" id="WP_012711473.1">
    <property type="nucleotide sequence ID" value="NC_012622.1"/>
</dbReference>
<dbReference type="SMR" id="C3NEK4"/>
<dbReference type="KEGG" id="siy:YG5714_1481"/>
<dbReference type="HOGENOM" id="CLU_113319_2_1_2"/>
<dbReference type="Proteomes" id="UP000002308">
    <property type="component" value="Chromosome"/>
</dbReference>
<dbReference type="GO" id="GO:0003677">
    <property type="term" value="F:DNA binding"/>
    <property type="evidence" value="ECO:0007669"/>
    <property type="project" value="UniProtKB-KW"/>
</dbReference>
<dbReference type="GO" id="GO:0003700">
    <property type="term" value="F:DNA-binding transcription factor activity"/>
    <property type="evidence" value="ECO:0007669"/>
    <property type="project" value="UniProtKB-UniRule"/>
</dbReference>
<dbReference type="GO" id="GO:0016151">
    <property type="term" value="F:nickel cation binding"/>
    <property type="evidence" value="ECO:0007669"/>
    <property type="project" value="UniProtKB-UniRule"/>
</dbReference>
<dbReference type="GO" id="GO:0010045">
    <property type="term" value="P:response to nickel cation"/>
    <property type="evidence" value="ECO:0007669"/>
    <property type="project" value="InterPro"/>
</dbReference>
<dbReference type="CDD" id="cd22231">
    <property type="entry name" value="RHH_NikR_HicB-like"/>
    <property type="match status" value="1"/>
</dbReference>
<dbReference type="Gene3D" id="3.30.70.1150">
    <property type="entry name" value="ACT-like. Chain A, domain 2"/>
    <property type="match status" value="1"/>
</dbReference>
<dbReference type="Gene3D" id="1.10.1220.10">
    <property type="entry name" value="Met repressor-like"/>
    <property type="match status" value="1"/>
</dbReference>
<dbReference type="HAMAP" id="MF_00476">
    <property type="entry name" value="NikR"/>
    <property type="match status" value="1"/>
</dbReference>
<dbReference type="InterPro" id="IPR027271">
    <property type="entry name" value="Acetolactate_synth/TF_NikR_C"/>
</dbReference>
<dbReference type="InterPro" id="IPR045865">
    <property type="entry name" value="ACT-like_dom_sf"/>
</dbReference>
<dbReference type="InterPro" id="IPR013321">
    <property type="entry name" value="Arc_rbn_hlx_hlx"/>
</dbReference>
<dbReference type="InterPro" id="IPR002145">
    <property type="entry name" value="CopG"/>
</dbReference>
<dbReference type="InterPro" id="IPR050192">
    <property type="entry name" value="CopG/NikR_regulator"/>
</dbReference>
<dbReference type="InterPro" id="IPR022988">
    <property type="entry name" value="Ni_resp_reg_NikR"/>
</dbReference>
<dbReference type="InterPro" id="IPR010985">
    <property type="entry name" value="Ribbon_hlx_hlx"/>
</dbReference>
<dbReference type="InterPro" id="IPR014864">
    <property type="entry name" value="TF_NikR_Ni-bd_C"/>
</dbReference>
<dbReference type="PANTHER" id="PTHR34719">
    <property type="entry name" value="NICKEL-RESPONSIVE REGULATOR"/>
    <property type="match status" value="1"/>
</dbReference>
<dbReference type="PANTHER" id="PTHR34719:SF2">
    <property type="entry name" value="NICKEL-RESPONSIVE REGULATOR"/>
    <property type="match status" value="1"/>
</dbReference>
<dbReference type="Pfam" id="PF08753">
    <property type="entry name" value="NikR_C"/>
    <property type="match status" value="1"/>
</dbReference>
<dbReference type="Pfam" id="PF01402">
    <property type="entry name" value="RHH_1"/>
    <property type="match status" value="1"/>
</dbReference>
<dbReference type="SUPFAM" id="SSF55021">
    <property type="entry name" value="ACT-like"/>
    <property type="match status" value="1"/>
</dbReference>
<dbReference type="SUPFAM" id="SSF47598">
    <property type="entry name" value="Ribbon-helix-helix"/>
    <property type="match status" value="1"/>
</dbReference>
<gene>
    <name type="ordered locus">YG5714_1481</name>
</gene>
<name>NIKR_SACI7</name>
<proteinExistence type="inferred from homology"/>
<accession>C3NEK4</accession>
<comment type="function">
    <text evidence="1">Transcriptional regulator.</text>
</comment>
<comment type="cofactor">
    <cofactor evidence="1">
        <name>Ni(2+)</name>
        <dbReference type="ChEBI" id="CHEBI:49786"/>
    </cofactor>
    <text evidence="1">Binds 1 nickel ion per subunit.</text>
</comment>
<comment type="similarity">
    <text evidence="1">Belongs to the transcriptional regulatory CopG/NikR family.</text>
</comment>
<keyword id="KW-0238">DNA-binding</keyword>
<keyword id="KW-0479">Metal-binding</keyword>
<keyword id="KW-0533">Nickel</keyword>
<keyword id="KW-0804">Transcription</keyword>
<keyword id="KW-0805">Transcription regulation</keyword>
<feature type="chain" id="PRO_1000206386" description="Putative nickel-responsive regulator">
    <location>
        <begin position="1"/>
        <end position="133"/>
    </location>
</feature>
<feature type="binding site" evidence="1">
    <location>
        <position position="74"/>
    </location>
    <ligand>
        <name>Ni(2+)</name>
        <dbReference type="ChEBI" id="CHEBI:49786"/>
    </ligand>
</feature>
<feature type="binding site" evidence="1">
    <location>
        <position position="85"/>
    </location>
    <ligand>
        <name>Ni(2+)</name>
        <dbReference type="ChEBI" id="CHEBI:49786"/>
    </ligand>
</feature>
<feature type="binding site" evidence="1">
    <location>
        <position position="87"/>
    </location>
    <ligand>
        <name>Ni(2+)</name>
        <dbReference type="ChEBI" id="CHEBI:49786"/>
    </ligand>
</feature>
<feature type="binding site" evidence="1">
    <location>
        <position position="93"/>
    </location>
    <ligand>
        <name>Ni(2+)</name>
        <dbReference type="ChEBI" id="CHEBI:49786"/>
    </ligand>
</feature>